<organism>
    <name type="scientific">Escherichia coli O6:K15:H31 (strain 536 / UPEC)</name>
    <dbReference type="NCBI Taxonomy" id="362663"/>
    <lineage>
        <taxon>Bacteria</taxon>
        <taxon>Pseudomonadati</taxon>
        <taxon>Pseudomonadota</taxon>
        <taxon>Gammaproteobacteria</taxon>
        <taxon>Enterobacterales</taxon>
        <taxon>Enterobacteriaceae</taxon>
        <taxon>Escherichia</taxon>
    </lineage>
</organism>
<keyword id="KW-0408">Iron</keyword>
<sequence>MSRTIFCTFLQREAEGQDFQLYPGELGKRIYNEISKEAWAQWQHKQTMLINEKKLNMMNAEHRKLLEQEMVNFLFEGKEVHIEGYTPEDKK</sequence>
<reference key="1">
    <citation type="journal article" date="2006" name="Mol. Microbiol.">
        <title>Role of pathogenicity island-associated integrases in the genome plasticity of uropathogenic Escherichia coli strain 536.</title>
        <authorList>
            <person name="Hochhut B."/>
            <person name="Wilde C."/>
            <person name="Balling G."/>
            <person name="Middendorf B."/>
            <person name="Dobrindt U."/>
            <person name="Brzuszkiewicz E."/>
            <person name="Gottschalk G."/>
            <person name="Carniel E."/>
            <person name="Hacker J."/>
        </authorList>
    </citation>
    <scope>NUCLEOTIDE SEQUENCE [LARGE SCALE GENOMIC DNA]</scope>
    <source>
        <strain>536 / UPEC</strain>
    </source>
</reference>
<protein>
    <recommendedName>
        <fullName evidence="1">Probable Fe(2+)-trafficking protein</fullName>
    </recommendedName>
</protein>
<dbReference type="EMBL" id="CP000247">
    <property type="protein sequence ID" value="ABG70940.1"/>
    <property type="molecule type" value="Genomic_DNA"/>
</dbReference>
<dbReference type="RefSeq" id="WP_000091700.1">
    <property type="nucleotide sequence ID" value="NC_008253.1"/>
</dbReference>
<dbReference type="SMR" id="Q0TDN9"/>
<dbReference type="KEGG" id="ecp:ECP_2956"/>
<dbReference type="HOGENOM" id="CLU_170994_0_0_6"/>
<dbReference type="Proteomes" id="UP000009182">
    <property type="component" value="Chromosome"/>
</dbReference>
<dbReference type="GO" id="GO:0005829">
    <property type="term" value="C:cytosol"/>
    <property type="evidence" value="ECO:0007669"/>
    <property type="project" value="TreeGrafter"/>
</dbReference>
<dbReference type="GO" id="GO:0005506">
    <property type="term" value="F:iron ion binding"/>
    <property type="evidence" value="ECO:0007669"/>
    <property type="project" value="UniProtKB-UniRule"/>
</dbReference>
<dbReference type="GO" id="GO:0034599">
    <property type="term" value="P:cellular response to oxidative stress"/>
    <property type="evidence" value="ECO:0007669"/>
    <property type="project" value="TreeGrafter"/>
</dbReference>
<dbReference type="FunFam" id="1.10.3880.10:FF:000001">
    <property type="entry name" value="Probable Fe(2+)-trafficking protein"/>
    <property type="match status" value="1"/>
</dbReference>
<dbReference type="Gene3D" id="1.10.3880.10">
    <property type="entry name" value="Fe(II) trafficking protein YggX"/>
    <property type="match status" value="1"/>
</dbReference>
<dbReference type="HAMAP" id="MF_00686">
    <property type="entry name" value="Fe_traffic_YggX"/>
    <property type="match status" value="1"/>
</dbReference>
<dbReference type="InterPro" id="IPR007457">
    <property type="entry name" value="Fe_traffick_prot_YggX"/>
</dbReference>
<dbReference type="InterPro" id="IPR036766">
    <property type="entry name" value="Fe_traffick_prot_YggX_sf"/>
</dbReference>
<dbReference type="NCBIfam" id="NF003817">
    <property type="entry name" value="PRK05408.1"/>
    <property type="match status" value="1"/>
</dbReference>
<dbReference type="PANTHER" id="PTHR36965">
    <property type="entry name" value="FE(2+)-TRAFFICKING PROTEIN-RELATED"/>
    <property type="match status" value="1"/>
</dbReference>
<dbReference type="PANTHER" id="PTHR36965:SF1">
    <property type="entry name" value="FE(2+)-TRAFFICKING PROTEIN-RELATED"/>
    <property type="match status" value="1"/>
</dbReference>
<dbReference type="Pfam" id="PF04362">
    <property type="entry name" value="Iron_traffic"/>
    <property type="match status" value="1"/>
</dbReference>
<dbReference type="PIRSF" id="PIRSF029827">
    <property type="entry name" value="Fe_traffic_YggX"/>
    <property type="match status" value="1"/>
</dbReference>
<dbReference type="SUPFAM" id="SSF111148">
    <property type="entry name" value="YggX-like"/>
    <property type="match status" value="1"/>
</dbReference>
<gene>
    <name evidence="1" type="primary">yggX</name>
    <name type="ordered locus">ECP_2956</name>
</gene>
<comment type="function">
    <text evidence="1">Could be a mediator in iron transactions between iron acquisition and iron-requiring processes, such as synthesis and/or repair of Fe-S clusters in biosynthetic enzymes.</text>
</comment>
<comment type="subunit">
    <text evidence="1">Monomer.</text>
</comment>
<comment type="similarity">
    <text evidence="1">Belongs to the Fe(2+)-trafficking protein family.</text>
</comment>
<evidence type="ECO:0000255" key="1">
    <source>
        <dbReference type="HAMAP-Rule" id="MF_00686"/>
    </source>
</evidence>
<accession>Q0TDN9</accession>
<proteinExistence type="inferred from homology"/>
<feature type="chain" id="PRO_1000045032" description="Probable Fe(2+)-trafficking protein">
    <location>
        <begin position="1"/>
        <end position="91"/>
    </location>
</feature>
<name>FETP_ECOL5</name>